<evidence type="ECO:0000255" key="1">
    <source>
        <dbReference type="HAMAP-Rule" id="MF_01386"/>
    </source>
</evidence>
<name>PSBX_SYNPW</name>
<proteinExistence type="inferred from homology"/>
<protein>
    <recommendedName>
        <fullName evidence="1">Photosystem II reaction center protein X</fullName>
    </recommendedName>
</protein>
<accession>A5GNP1</accession>
<reference key="1">
    <citation type="submission" date="2006-05" db="EMBL/GenBank/DDBJ databases">
        <authorList>
            <consortium name="Genoscope"/>
        </authorList>
    </citation>
    <scope>NUCLEOTIDE SEQUENCE [LARGE SCALE GENOMIC DNA]</scope>
    <source>
        <strain>WH7803</strain>
    </source>
</reference>
<organism>
    <name type="scientific">Synechococcus sp. (strain WH7803)</name>
    <dbReference type="NCBI Taxonomy" id="32051"/>
    <lineage>
        <taxon>Bacteria</taxon>
        <taxon>Bacillati</taxon>
        <taxon>Cyanobacteriota</taxon>
        <taxon>Cyanophyceae</taxon>
        <taxon>Synechococcales</taxon>
        <taxon>Synechococcaceae</taxon>
        <taxon>Synechococcus</taxon>
    </lineage>
</organism>
<sequence length="40" mass="4349">MTPSLANFLSSLVWGAVIVVVPASIGLFFLSQTDRVDRKL</sequence>
<dbReference type="EMBL" id="CT971583">
    <property type="protein sequence ID" value="CAK24556.1"/>
    <property type="molecule type" value="Genomic_DNA"/>
</dbReference>
<dbReference type="SMR" id="A5GNP1"/>
<dbReference type="STRING" id="32051.SynWH7803_2130"/>
<dbReference type="KEGG" id="syx:SynWH7803_2130"/>
<dbReference type="eggNOG" id="ENOG502ZJI0">
    <property type="taxonomic scope" value="Bacteria"/>
</dbReference>
<dbReference type="HOGENOM" id="CLU_212837_1_0_3"/>
<dbReference type="OrthoDB" id="541645at2"/>
<dbReference type="Proteomes" id="UP000001566">
    <property type="component" value="Chromosome"/>
</dbReference>
<dbReference type="GO" id="GO:0009523">
    <property type="term" value="C:photosystem II"/>
    <property type="evidence" value="ECO:0007669"/>
    <property type="project" value="UniProtKB-KW"/>
</dbReference>
<dbReference type="GO" id="GO:0031676">
    <property type="term" value="C:plasma membrane-derived thylakoid membrane"/>
    <property type="evidence" value="ECO:0007669"/>
    <property type="project" value="UniProtKB-SubCell"/>
</dbReference>
<dbReference type="GO" id="GO:0015979">
    <property type="term" value="P:photosynthesis"/>
    <property type="evidence" value="ECO:0007669"/>
    <property type="project" value="UniProtKB-UniRule"/>
</dbReference>
<dbReference type="Gene3D" id="1.20.5.510">
    <property type="entry name" value="Single helix bin"/>
    <property type="match status" value="1"/>
</dbReference>
<dbReference type="HAMAP" id="MF_01386">
    <property type="entry name" value="PSII_PsbX_1"/>
    <property type="match status" value="1"/>
</dbReference>
<dbReference type="InterPro" id="IPR009518">
    <property type="entry name" value="PSII_PsbX"/>
</dbReference>
<dbReference type="InterPro" id="IPR023431">
    <property type="entry name" value="PSII_PsbX_type_1_subfam"/>
</dbReference>
<dbReference type="Pfam" id="PF06596">
    <property type="entry name" value="PsbX"/>
    <property type="match status" value="1"/>
</dbReference>
<gene>
    <name evidence="1" type="primary">psbX</name>
    <name type="ordered locus">SynWH7803_2130</name>
</gene>
<comment type="function">
    <text evidence="1">Involved in the binding and/or turnover of quinones at the Q(B) site of photosystem II (PSII). PSII is a light-driven water plastoquinone oxidoreductase, using light energy to abstract electrons from H(2)O, generating a proton gradient subsequently used for ATP formation.</text>
</comment>
<comment type="subunit">
    <text evidence="1">PSII is composed of 1 copy each of membrane proteins PsbA, PsbB, PsbC, PsbD, PsbE, PsbF, PsbH, PsbI, PsbJ, PsbK, PsbL, PsbM, PsbT, PsbX, PsbY, PsbZ, Psb30/Ycf12, peripheral proteins PsbO, CyanoQ (PsbQ), PsbU, PsbV and a large number of cofactors. It forms dimeric complexes.</text>
</comment>
<comment type="subcellular location">
    <subcellularLocation>
        <location evidence="1">Cellular thylakoid membrane</location>
        <topology evidence="1">Single-pass membrane protein</topology>
    </subcellularLocation>
</comment>
<comment type="similarity">
    <text evidence="1">Belongs to the PsbX family. Type 1 subfamily.</text>
</comment>
<feature type="chain" id="PRO_0000345384" description="Photosystem II reaction center protein X">
    <location>
        <begin position="1"/>
        <end position="40"/>
    </location>
</feature>
<feature type="transmembrane region" description="Helical" evidence="1">
    <location>
        <begin position="8"/>
        <end position="28"/>
    </location>
</feature>
<keyword id="KW-0472">Membrane</keyword>
<keyword id="KW-0602">Photosynthesis</keyword>
<keyword id="KW-0604">Photosystem II</keyword>
<keyword id="KW-1185">Reference proteome</keyword>
<keyword id="KW-0793">Thylakoid</keyword>
<keyword id="KW-0812">Transmembrane</keyword>
<keyword id="KW-1133">Transmembrane helix</keyword>